<name>SYP21_ARATH</name>
<protein>
    <recommendedName>
        <fullName>Syntaxin-21</fullName>
        <shortName>AtSYP21</shortName>
    </recommendedName>
    <alternativeName>
        <fullName>PEP12 homolog</fullName>
        <shortName>AtPEP12</shortName>
    </alternativeName>
    <alternativeName>
        <fullName>aPEP12</fullName>
    </alternativeName>
</protein>
<evidence type="ECO:0000250" key="1">
    <source>
        <dbReference type="UniProtKB" id="P93654"/>
    </source>
</evidence>
<evidence type="ECO:0000255" key="2"/>
<evidence type="ECO:0000255" key="3">
    <source>
        <dbReference type="PROSITE-ProRule" id="PRU00202"/>
    </source>
</evidence>
<evidence type="ECO:0000256" key="4">
    <source>
        <dbReference type="SAM" id="MobiDB-lite"/>
    </source>
</evidence>
<evidence type="ECO:0000269" key="5">
    <source>
    </source>
</evidence>
<evidence type="ECO:0000269" key="6">
    <source>
    </source>
</evidence>
<evidence type="ECO:0000269" key="7">
    <source>
    </source>
</evidence>
<evidence type="ECO:0000305" key="8"/>
<dbReference type="EMBL" id="L41651">
    <property type="protein sequence ID" value="AAA87296.1"/>
    <property type="molecule type" value="mRNA"/>
</dbReference>
<dbReference type="EMBL" id="AL391147">
    <property type="protein sequence ID" value="CAC01847.1"/>
    <property type="molecule type" value="Genomic_DNA"/>
</dbReference>
<dbReference type="EMBL" id="CP002688">
    <property type="protein sequence ID" value="AED92345.1"/>
    <property type="molecule type" value="Genomic_DNA"/>
</dbReference>
<dbReference type="EMBL" id="AF411797">
    <property type="protein sequence ID" value="AAL06486.1"/>
    <property type="molecule type" value="mRNA"/>
</dbReference>
<dbReference type="EMBL" id="AY088599">
    <property type="protein sequence ID" value="AAM66128.1"/>
    <property type="molecule type" value="mRNA"/>
</dbReference>
<dbReference type="PIR" id="T51515">
    <property type="entry name" value="T51515"/>
</dbReference>
<dbReference type="RefSeq" id="NP_197185.1">
    <property type="nucleotide sequence ID" value="NM_121689.4"/>
</dbReference>
<dbReference type="SMR" id="Q39233"/>
<dbReference type="BioGRID" id="16822">
    <property type="interactions" value="54"/>
</dbReference>
<dbReference type="FunCoup" id="Q39233">
    <property type="interactions" value="3460"/>
</dbReference>
<dbReference type="IntAct" id="Q39233">
    <property type="interactions" value="52"/>
</dbReference>
<dbReference type="STRING" id="3702.Q39233"/>
<dbReference type="SwissPalm" id="Q39233"/>
<dbReference type="PaxDb" id="3702-AT5G16830.1"/>
<dbReference type="ProteomicsDB" id="228470"/>
<dbReference type="EnsemblPlants" id="AT5G16830.1">
    <property type="protein sequence ID" value="AT5G16830.1"/>
    <property type="gene ID" value="AT5G16830"/>
</dbReference>
<dbReference type="GeneID" id="831546"/>
<dbReference type="Gramene" id="AT5G16830.1">
    <property type="protein sequence ID" value="AT5G16830.1"/>
    <property type="gene ID" value="AT5G16830"/>
</dbReference>
<dbReference type="KEGG" id="ath:AT5G16830"/>
<dbReference type="Araport" id="AT5G16830"/>
<dbReference type="TAIR" id="AT5G16830">
    <property type="gene designation" value="SYP21"/>
</dbReference>
<dbReference type="eggNOG" id="KOG0811">
    <property type="taxonomic scope" value="Eukaryota"/>
</dbReference>
<dbReference type="HOGENOM" id="CLU_059257_3_0_1"/>
<dbReference type="InParanoid" id="Q39233"/>
<dbReference type="OMA" id="FRNVPPI"/>
<dbReference type="OrthoDB" id="364348at2759"/>
<dbReference type="PhylomeDB" id="Q39233"/>
<dbReference type="PRO" id="PR:Q39233"/>
<dbReference type="Proteomes" id="UP000006548">
    <property type="component" value="Chromosome 5"/>
</dbReference>
<dbReference type="ExpressionAtlas" id="Q39233">
    <property type="expression patterns" value="baseline and differential"/>
</dbReference>
<dbReference type="GO" id="GO:0005770">
    <property type="term" value="C:late endosome"/>
    <property type="evidence" value="ECO:0000314"/>
    <property type="project" value="TAIR"/>
</dbReference>
<dbReference type="GO" id="GO:0016020">
    <property type="term" value="C:membrane"/>
    <property type="evidence" value="ECO:0000314"/>
    <property type="project" value="TAIR"/>
</dbReference>
<dbReference type="GO" id="GO:0030140">
    <property type="term" value="C:trans-Golgi network transport vesicle"/>
    <property type="evidence" value="ECO:0000314"/>
    <property type="project" value="TAIR"/>
</dbReference>
<dbReference type="GO" id="GO:0005484">
    <property type="term" value="F:SNAP receptor activity"/>
    <property type="evidence" value="ECO:0000314"/>
    <property type="project" value="TAIR"/>
</dbReference>
<dbReference type="GO" id="GO:0006896">
    <property type="term" value="P:Golgi to vacuole transport"/>
    <property type="evidence" value="ECO:0000304"/>
    <property type="project" value="TAIR"/>
</dbReference>
<dbReference type="GO" id="GO:0045324">
    <property type="term" value="P:late endosome to vacuole transport"/>
    <property type="evidence" value="ECO:0000315"/>
    <property type="project" value="TAIR"/>
</dbReference>
<dbReference type="GO" id="GO:0006623">
    <property type="term" value="P:protein targeting to vacuole"/>
    <property type="evidence" value="ECO:0000314"/>
    <property type="project" value="TAIR"/>
</dbReference>
<dbReference type="CDD" id="cd15840">
    <property type="entry name" value="SNARE_Qa"/>
    <property type="match status" value="1"/>
</dbReference>
<dbReference type="CDD" id="cd00179">
    <property type="entry name" value="SynN"/>
    <property type="match status" value="1"/>
</dbReference>
<dbReference type="FunFam" id="1.20.5.110:FF:000035">
    <property type="entry name" value="Syntaxin-22 like"/>
    <property type="match status" value="1"/>
</dbReference>
<dbReference type="FunFam" id="1.20.58.70:FF:000004">
    <property type="entry name" value="Syntaxin-22 like"/>
    <property type="match status" value="1"/>
</dbReference>
<dbReference type="Gene3D" id="1.20.5.110">
    <property type="match status" value="1"/>
</dbReference>
<dbReference type="Gene3D" id="1.20.58.70">
    <property type="match status" value="1"/>
</dbReference>
<dbReference type="InterPro" id="IPR010989">
    <property type="entry name" value="SNARE"/>
</dbReference>
<dbReference type="InterPro" id="IPR045242">
    <property type="entry name" value="Syntaxin"/>
</dbReference>
<dbReference type="InterPro" id="IPR006012">
    <property type="entry name" value="Syntaxin/epimorphin_CS"/>
</dbReference>
<dbReference type="InterPro" id="IPR006011">
    <property type="entry name" value="Syntaxin_N"/>
</dbReference>
<dbReference type="InterPro" id="IPR000727">
    <property type="entry name" value="T_SNARE_dom"/>
</dbReference>
<dbReference type="PANTHER" id="PTHR19957:SF38">
    <property type="entry name" value="LD27581P"/>
    <property type="match status" value="1"/>
</dbReference>
<dbReference type="PANTHER" id="PTHR19957">
    <property type="entry name" value="SYNTAXIN"/>
    <property type="match status" value="1"/>
</dbReference>
<dbReference type="Pfam" id="PF05739">
    <property type="entry name" value="SNARE"/>
    <property type="match status" value="1"/>
</dbReference>
<dbReference type="Pfam" id="PF14523">
    <property type="entry name" value="Syntaxin_2"/>
    <property type="match status" value="1"/>
</dbReference>
<dbReference type="SMART" id="SM00503">
    <property type="entry name" value="SynN"/>
    <property type="match status" value="1"/>
</dbReference>
<dbReference type="SMART" id="SM00397">
    <property type="entry name" value="t_SNARE"/>
    <property type="match status" value="1"/>
</dbReference>
<dbReference type="SUPFAM" id="SSF47661">
    <property type="entry name" value="t-snare proteins"/>
    <property type="match status" value="1"/>
</dbReference>
<dbReference type="PROSITE" id="PS00914">
    <property type="entry name" value="SYNTAXIN"/>
    <property type="match status" value="1"/>
</dbReference>
<dbReference type="PROSITE" id="PS50192">
    <property type="entry name" value="T_SNARE"/>
    <property type="match status" value="1"/>
</dbReference>
<gene>
    <name type="primary">SYP21</name>
    <name type="ordered locus">At5g16830</name>
    <name type="ORF">F5E19_170</name>
</gene>
<comment type="function">
    <text>May function in the docking or fusion of transport vesicles with the prevacuolar membrane.</text>
</comment>
<comment type="subunit">
    <text evidence="5 6">Interacts with VTI11 and SYP51 to form a t-SNARE complex and with alpha-SNAP to form a 20S complex.</text>
</comment>
<comment type="interaction">
    <interactant intactId="EBI-2352544">
        <id>Q39233</id>
    </interactant>
    <interactant intactId="EBI-1162795">
        <id>Q9SEL6</id>
        <label>VTI11</label>
    </interactant>
    <organismsDiffer>false</organismsDiffer>
    <experiments>4</experiments>
</comment>
<comment type="subcellular location">
    <subcellularLocation>
        <location evidence="7">Prevacuolar compartment membrane</location>
        <topology evidence="7">Single-pass type IV membrane protein</topology>
    </subcellularLocation>
</comment>
<comment type="tissue specificity">
    <text>A high level expression is seen in the roots while a low level expression is seen in the leaves.</text>
</comment>
<comment type="similarity">
    <text evidence="8">Belongs to the syntaxin family.</text>
</comment>
<proteinExistence type="evidence at protein level"/>
<accession>Q39233</accession>
<sequence>MSFQDLEAGTRSPAPNRFTGGRQQRPSSRGDPSQEVAAGIFRISTAVNSFFRLVNSIGTPKDTLELRDKLQKTRLQISELVKNTSAKLKEASEADLHGSASQIKKIADAKLAKDFQSVLKEFQKAQRLAAEREITYTPVVTKEIPTSYNAPELDTESLRISQQQALLLQSRRQEVVFLDNEITFNEAIIEEREQGIREIEDQIRDVNGMFKDLALMVNHQGNIVDDISSNLDNSHAATTQATVQLRKAAKTQRSNSSLTCLLILIFGIVLLIVIIVVLV</sequence>
<organism>
    <name type="scientific">Arabidopsis thaliana</name>
    <name type="common">Mouse-ear cress</name>
    <dbReference type="NCBI Taxonomy" id="3702"/>
    <lineage>
        <taxon>Eukaryota</taxon>
        <taxon>Viridiplantae</taxon>
        <taxon>Streptophyta</taxon>
        <taxon>Embryophyta</taxon>
        <taxon>Tracheophyta</taxon>
        <taxon>Spermatophyta</taxon>
        <taxon>Magnoliopsida</taxon>
        <taxon>eudicotyledons</taxon>
        <taxon>Gunneridae</taxon>
        <taxon>Pentapetalae</taxon>
        <taxon>rosids</taxon>
        <taxon>malvids</taxon>
        <taxon>Brassicales</taxon>
        <taxon>Brassicaceae</taxon>
        <taxon>Camelineae</taxon>
        <taxon>Arabidopsis</taxon>
    </lineage>
</organism>
<keyword id="KW-0007">Acetylation</keyword>
<keyword id="KW-0175">Coiled coil</keyword>
<keyword id="KW-0472">Membrane</keyword>
<keyword id="KW-0653">Protein transport</keyword>
<keyword id="KW-1185">Reference proteome</keyword>
<keyword id="KW-0812">Transmembrane</keyword>
<keyword id="KW-1133">Transmembrane helix</keyword>
<keyword id="KW-0813">Transport</keyword>
<feature type="initiator methionine" description="Removed" evidence="1">
    <location>
        <position position="1"/>
    </location>
</feature>
<feature type="chain" id="PRO_0000210253" description="Syntaxin-21">
    <location>
        <begin position="2"/>
        <end position="279"/>
    </location>
</feature>
<feature type="topological domain" description="Cytoplasmic" evidence="2">
    <location>
        <begin position="2"/>
        <end position="258"/>
    </location>
</feature>
<feature type="transmembrane region" description="Helical; Anchor for type IV membrane protein" evidence="2">
    <location>
        <begin position="259"/>
        <end position="279"/>
    </location>
</feature>
<feature type="domain" description="t-SNARE coiled-coil homology" evidence="3">
    <location>
        <begin position="186"/>
        <end position="248"/>
    </location>
</feature>
<feature type="region of interest" description="Disordered" evidence="4">
    <location>
        <begin position="1"/>
        <end position="34"/>
    </location>
</feature>
<feature type="coiled-coil region" evidence="2">
    <location>
        <begin position="65"/>
        <end position="94"/>
    </location>
</feature>
<feature type="compositionally biased region" description="Polar residues" evidence="4">
    <location>
        <begin position="21"/>
        <end position="31"/>
    </location>
</feature>
<feature type="modified residue" description="N-acetylserine" evidence="1">
    <location>
        <position position="2"/>
    </location>
</feature>
<feature type="sequence conflict" description="In Ref. 5; AAM66128." evidence="8" ref="5">
    <original>A</original>
    <variation>T</variation>
    <location>
        <position position="14"/>
    </location>
</feature>
<feature type="sequence conflict" description="In Ref. 5; AAM66128." evidence="8" ref="5">
    <original>I</original>
    <variation>T</variation>
    <location>
        <position position="263"/>
    </location>
</feature>
<reference key="1">
    <citation type="journal article" date="1995" name="Proc. Natl. Acad. Sci. U.S.A.">
        <title>An Arabidopsis syntaxin homologue isolated by functional complementation of a yeast pep12 mutant.</title>
        <authorList>
            <person name="Bassham D.C."/>
            <person name="Gal S."/>
            <person name="da Silva Conceicao A."/>
            <person name="Raikhel N.V."/>
        </authorList>
    </citation>
    <scope>NUCLEOTIDE SEQUENCE [MRNA]</scope>
    <source>
        <strain>cv. RLD</strain>
    </source>
</reference>
<reference key="2">
    <citation type="journal article" date="2000" name="Nature">
        <title>Sequence and analysis of chromosome 5 of the plant Arabidopsis thaliana.</title>
        <authorList>
            <person name="Tabata S."/>
            <person name="Kaneko T."/>
            <person name="Nakamura Y."/>
            <person name="Kotani H."/>
            <person name="Kato T."/>
            <person name="Asamizu E."/>
            <person name="Miyajima N."/>
            <person name="Sasamoto S."/>
            <person name="Kimura T."/>
            <person name="Hosouchi T."/>
            <person name="Kawashima K."/>
            <person name="Kohara M."/>
            <person name="Matsumoto M."/>
            <person name="Matsuno A."/>
            <person name="Muraki A."/>
            <person name="Nakayama S."/>
            <person name="Nakazaki N."/>
            <person name="Naruo K."/>
            <person name="Okumura S."/>
            <person name="Shinpo S."/>
            <person name="Takeuchi C."/>
            <person name="Wada T."/>
            <person name="Watanabe A."/>
            <person name="Yamada M."/>
            <person name="Yasuda M."/>
            <person name="Sato S."/>
            <person name="de la Bastide M."/>
            <person name="Huang E."/>
            <person name="Spiegel L."/>
            <person name="Gnoj L."/>
            <person name="O'Shaughnessy A."/>
            <person name="Preston R."/>
            <person name="Habermann K."/>
            <person name="Murray J."/>
            <person name="Johnson D."/>
            <person name="Rohlfing T."/>
            <person name="Nelson J."/>
            <person name="Stoneking T."/>
            <person name="Pepin K."/>
            <person name="Spieth J."/>
            <person name="Sekhon M."/>
            <person name="Armstrong J."/>
            <person name="Becker M."/>
            <person name="Belter E."/>
            <person name="Cordum H."/>
            <person name="Cordes M."/>
            <person name="Courtney L."/>
            <person name="Courtney W."/>
            <person name="Dante M."/>
            <person name="Du H."/>
            <person name="Edwards J."/>
            <person name="Fryman J."/>
            <person name="Haakensen B."/>
            <person name="Lamar E."/>
            <person name="Latreille P."/>
            <person name="Leonard S."/>
            <person name="Meyer R."/>
            <person name="Mulvaney E."/>
            <person name="Ozersky P."/>
            <person name="Riley A."/>
            <person name="Strowmatt C."/>
            <person name="Wagner-McPherson C."/>
            <person name="Wollam A."/>
            <person name="Yoakum M."/>
            <person name="Bell M."/>
            <person name="Dedhia N."/>
            <person name="Parnell L."/>
            <person name="Shah R."/>
            <person name="Rodriguez M."/>
            <person name="Hoon See L."/>
            <person name="Vil D."/>
            <person name="Baker J."/>
            <person name="Kirchoff K."/>
            <person name="Toth K."/>
            <person name="King L."/>
            <person name="Bahret A."/>
            <person name="Miller B."/>
            <person name="Marra M.A."/>
            <person name="Martienssen R."/>
            <person name="McCombie W.R."/>
            <person name="Wilson R.K."/>
            <person name="Murphy G."/>
            <person name="Bancroft I."/>
            <person name="Volckaert G."/>
            <person name="Wambutt R."/>
            <person name="Duesterhoeft A."/>
            <person name="Stiekema W."/>
            <person name="Pohl T."/>
            <person name="Entian K.-D."/>
            <person name="Terryn N."/>
            <person name="Hartley N."/>
            <person name="Bent E."/>
            <person name="Johnson S."/>
            <person name="Langham S.-A."/>
            <person name="McCullagh B."/>
            <person name="Robben J."/>
            <person name="Grymonprez B."/>
            <person name="Zimmermann W."/>
            <person name="Ramsperger U."/>
            <person name="Wedler H."/>
            <person name="Balke K."/>
            <person name="Wedler E."/>
            <person name="Peters S."/>
            <person name="van Staveren M."/>
            <person name="Dirkse W."/>
            <person name="Mooijman P."/>
            <person name="Klein Lankhorst R."/>
            <person name="Weitzenegger T."/>
            <person name="Bothe G."/>
            <person name="Rose M."/>
            <person name="Hauf J."/>
            <person name="Berneiser S."/>
            <person name="Hempel S."/>
            <person name="Feldpausch M."/>
            <person name="Lamberth S."/>
            <person name="Villarroel R."/>
            <person name="Gielen J."/>
            <person name="Ardiles W."/>
            <person name="Bents O."/>
            <person name="Lemcke K."/>
            <person name="Kolesov G."/>
            <person name="Mayer K.F.X."/>
            <person name="Rudd S."/>
            <person name="Schoof H."/>
            <person name="Schueller C."/>
            <person name="Zaccaria P."/>
            <person name="Mewes H.-W."/>
            <person name="Bevan M."/>
            <person name="Fransz P.F."/>
        </authorList>
    </citation>
    <scope>NUCLEOTIDE SEQUENCE [LARGE SCALE GENOMIC DNA]</scope>
    <source>
        <strain>cv. Columbia</strain>
    </source>
</reference>
<reference key="3">
    <citation type="journal article" date="2017" name="Plant J.">
        <title>Araport11: a complete reannotation of the Arabidopsis thaliana reference genome.</title>
        <authorList>
            <person name="Cheng C.Y."/>
            <person name="Krishnakumar V."/>
            <person name="Chan A.P."/>
            <person name="Thibaud-Nissen F."/>
            <person name="Schobel S."/>
            <person name="Town C.D."/>
        </authorList>
    </citation>
    <scope>GENOME REANNOTATION</scope>
    <source>
        <strain>cv. Columbia</strain>
    </source>
</reference>
<reference key="4">
    <citation type="journal article" date="2003" name="Science">
        <title>Empirical analysis of transcriptional activity in the Arabidopsis genome.</title>
        <authorList>
            <person name="Yamada K."/>
            <person name="Lim J."/>
            <person name="Dale J.M."/>
            <person name="Chen H."/>
            <person name="Shinn P."/>
            <person name="Palm C.J."/>
            <person name="Southwick A.M."/>
            <person name="Wu H.C."/>
            <person name="Kim C.J."/>
            <person name="Nguyen M."/>
            <person name="Pham P.K."/>
            <person name="Cheuk R.F."/>
            <person name="Karlin-Newmann G."/>
            <person name="Liu S.X."/>
            <person name="Lam B."/>
            <person name="Sakano H."/>
            <person name="Wu T."/>
            <person name="Yu G."/>
            <person name="Miranda M."/>
            <person name="Quach H.L."/>
            <person name="Tripp M."/>
            <person name="Chang C.H."/>
            <person name="Lee J.M."/>
            <person name="Toriumi M.J."/>
            <person name="Chan M.M."/>
            <person name="Tang C.C."/>
            <person name="Onodera C.S."/>
            <person name="Deng J.M."/>
            <person name="Akiyama K."/>
            <person name="Ansari Y."/>
            <person name="Arakawa T."/>
            <person name="Banh J."/>
            <person name="Banno F."/>
            <person name="Bowser L."/>
            <person name="Brooks S.Y."/>
            <person name="Carninci P."/>
            <person name="Chao Q."/>
            <person name="Choy N."/>
            <person name="Enju A."/>
            <person name="Goldsmith A.D."/>
            <person name="Gurjal M."/>
            <person name="Hansen N.F."/>
            <person name="Hayashizaki Y."/>
            <person name="Johnson-Hopson C."/>
            <person name="Hsuan V.W."/>
            <person name="Iida K."/>
            <person name="Karnes M."/>
            <person name="Khan S."/>
            <person name="Koesema E."/>
            <person name="Ishida J."/>
            <person name="Jiang P.X."/>
            <person name="Jones T."/>
            <person name="Kawai J."/>
            <person name="Kamiya A."/>
            <person name="Meyers C."/>
            <person name="Nakajima M."/>
            <person name="Narusaka M."/>
            <person name="Seki M."/>
            <person name="Sakurai T."/>
            <person name="Satou M."/>
            <person name="Tamse R."/>
            <person name="Vaysberg M."/>
            <person name="Wallender E.K."/>
            <person name="Wong C."/>
            <person name="Yamamura Y."/>
            <person name="Yuan S."/>
            <person name="Shinozaki K."/>
            <person name="Davis R.W."/>
            <person name="Theologis A."/>
            <person name="Ecker J.R."/>
        </authorList>
    </citation>
    <scope>NUCLEOTIDE SEQUENCE [LARGE SCALE MRNA]</scope>
    <source>
        <strain>cv. Columbia</strain>
    </source>
</reference>
<reference key="5">
    <citation type="submission" date="2002-03" db="EMBL/GenBank/DDBJ databases">
        <title>Full-length cDNA from Arabidopsis thaliana.</title>
        <authorList>
            <person name="Brover V.V."/>
            <person name="Troukhan M.E."/>
            <person name="Alexandrov N.A."/>
            <person name="Lu Y.-P."/>
            <person name="Flavell R.B."/>
            <person name="Feldmann K.A."/>
        </authorList>
    </citation>
    <scope>NUCLEOTIDE SEQUENCE [LARGE SCALE MRNA]</scope>
</reference>
<reference key="6">
    <citation type="journal article" date="1997" name="Plant Cell">
        <title>The syntaxin homolog AtPEP12p resides on a late post-Golgi compartment in plants.</title>
        <authorList>
            <person name="da Silva Conceicao A."/>
            <person name="Marty-Mazars D."/>
            <person name="Bassham D.C."/>
            <person name="Sanderfoot A.A."/>
            <person name="Marty F."/>
            <person name="Raikhel N.V."/>
        </authorList>
    </citation>
    <scope>SUBCELLULAR LOCATION</scope>
</reference>
<reference key="7">
    <citation type="journal article" date="1999" name="Plant J.">
        <title>The pre-vacuolar t-SNARE AtPEP12p forms a 20S complex that dissociates in the presence of ATP.</title>
        <authorList>
            <person name="Bassham D.C."/>
            <person name="Raikhel N.V."/>
        </authorList>
    </citation>
    <scope>INTERACTION WITH ALPHA-SNAP</scope>
</reference>
<reference key="8">
    <citation type="journal article" date="2001" name="Mol. Biol. Cell">
        <title>Interactions between syntaxins identify at least five SNARE complexes within the Golgi/prevacuolar system of the Arabidopsis cell.</title>
        <authorList>
            <person name="Sanderfoot A.A."/>
            <person name="Kovaleva V."/>
            <person name="Bassham D.C."/>
            <person name="Raikhel N.V."/>
        </authorList>
    </citation>
    <scope>INTERACTION WITH VTI11 AND SYP51</scope>
</reference>